<sequence length="78" mass="9348">MAMLCMCDECQAIINYYVVQIEQLCNEIVKTRKRVEPYKKLGKLFFEIIQNDLFEAIAEEVFRIDEKPKRKTNKRVCK</sequence>
<proteinExistence type="predicted"/>
<feature type="chain" id="PRO_0000220809" description="Uncharacterized protein UU150">
    <location>
        <begin position="1"/>
        <end position="78"/>
    </location>
</feature>
<name>Y150_UREPA</name>
<accession>Q9PQZ4</accession>
<reference key="1">
    <citation type="journal article" date="2000" name="Nature">
        <title>The complete sequence of the mucosal pathogen Ureaplasma urealyticum.</title>
        <authorList>
            <person name="Glass J.I."/>
            <person name="Lefkowitz E.J."/>
            <person name="Glass J.S."/>
            <person name="Heiner C.R."/>
            <person name="Chen E.Y."/>
            <person name="Cassell G.H."/>
        </authorList>
    </citation>
    <scope>NUCLEOTIDE SEQUENCE [LARGE SCALE GENOMIC DNA]</scope>
    <source>
        <strain>ATCC 700970</strain>
    </source>
</reference>
<keyword id="KW-1185">Reference proteome</keyword>
<organism>
    <name type="scientific">Ureaplasma parvum serovar 3 (strain ATCC 700970)</name>
    <dbReference type="NCBI Taxonomy" id="273119"/>
    <lineage>
        <taxon>Bacteria</taxon>
        <taxon>Bacillati</taxon>
        <taxon>Mycoplasmatota</taxon>
        <taxon>Mycoplasmoidales</taxon>
        <taxon>Mycoplasmoidaceae</taxon>
        <taxon>Ureaplasma</taxon>
    </lineage>
</organism>
<gene>
    <name type="ordered locus">UU150</name>
</gene>
<dbReference type="EMBL" id="AF222894">
    <property type="protein sequence ID" value="AAF30556.1"/>
    <property type="molecule type" value="Genomic_DNA"/>
</dbReference>
<dbReference type="STRING" id="273119.UU150"/>
<dbReference type="EnsemblBacteria" id="AAF30556">
    <property type="protein sequence ID" value="AAF30556"/>
    <property type="gene ID" value="UU150"/>
</dbReference>
<dbReference type="KEGG" id="uur:UU150"/>
<dbReference type="HOGENOM" id="CLU_2703784_0_0_14"/>
<dbReference type="Proteomes" id="UP000000423">
    <property type="component" value="Chromosome"/>
</dbReference>
<protein>
    <recommendedName>
        <fullName>Uncharacterized protein UU150</fullName>
    </recommendedName>
</protein>